<sequence>MKRVNFTISGHGYILIKPNYPDHFNYRLPADMKFYKCVLTINYISVSSMSGPFTGPYEKYSSGYFSEFGPQHLFSINRYHGLRFSRQSSQEYDSVGHILYSPITYYVSGAEHVTMDSIDQRREFQDSIYTHDSSDSENIMSDSSQSECDYADLMINLDKLI</sequence>
<accession>O94696</accession>
<name>YG1C_SCHPO</name>
<reference key="1">
    <citation type="journal article" date="2002" name="Nature">
        <title>The genome sequence of Schizosaccharomyces pombe.</title>
        <authorList>
            <person name="Wood V."/>
            <person name="Gwilliam R."/>
            <person name="Rajandream M.A."/>
            <person name="Lyne M.H."/>
            <person name="Lyne R."/>
            <person name="Stewart A."/>
            <person name="Sgouros J.G."/>
            <person name="Peat N."/>
            <person name="Hayles J."/>
            <person name="Baker S.G."/>
            <person name="Basham D."/>
            <person name="Bowman S."/>
            <person name="Brooks K."/>
            <person name="Brown D."/>
            <person name="Brown S."/>
            <person name="Chillingworth T."/>
            <person name="Churcher C.M."/>
            <person name="Collins M."/>
            <person name="Connor R."/>
            <person name="Cronin A."/>
            <person name="Davis P."/>
            <person name="Feltwell T."/>
            <person name="Fraser A."/>
            <person name="Gentles S."/>
            <person name="Goble A."/>
            <person name="Hamlin N."/>
            <person name="Harris D.E."/>
            <person name="Hidalgo J."/>
            <person name="Hodgson G."/>
            <person name="Holroyd S."/>
            <person name="Hornsby T."/>
            <person name="Howarth S."/>
            <person name="Huckle E.J."/>
            <person name="Hunt S."/>
            <person name="Jagels K."/>
            <person name="James K.D."/>
            <person name="Jones L."/>
            <person name="Jones M."/>
            <person name="Leather S."/>
            <person name="McDonald S."/>
            <person name="McLean J."/>
            <person name="Mooney P."/>
            <person name="Moule S."/>
            <person name="Mungall K.L."/>
            <person name="Murphy L.D."/>
            <person name="Niblett D."/>
            <person name="Odell C."/>
            <person name="Oliver K."/>
            <person name="O'Neil S."/>
            <person name="Pearson D."/>
            <person name="Quail M.A."/>
            <person name="Rabbinowitsch E."/>
            <person name="Rutherford K.M."/>
            <person name="Rutter S."/>
            <person name="Saunders D."/>
            <person name="Seeger K."/>
            <person name="Sharp S."/>
            <person name="Skelton J."/>
            <person name="Simmonds M.N."/>
            <person name="Squares R."/>
            <person name="Squares S."/>
            <person name="Stevens K."/>
            <person name="Taylor K."/>
            <person name="Taylor R.G."/>
            <person name="Tivey A."/>
            <person name="Walsh S.V."/>
            <person name="Warren T."/>
            <person name="Whitehead S."/>
            <person name="Woodward J.R."/>
            <person name="Volckaert G."/>
            <person name="Aert R."/>
            <person name="Robben J."/>
            <person name="Grymonprez B."/>
            <person name="Weltjens I."/>
            <person name="Vanstreels E."/>
            <person name="Rieger M."/>
            <person name="Schaefer M."/>
            <person name="Mueller-Auer S."/>
            <person name="Gabel C."/>
            <person name="Fuchs M."/>
            <person name="Duesterhoeft A."/>
            <person name="Fritzc C."/>
            <person name="Holzer E."/>
            <person name="Moestl D."/>
            <person name="Hilbert H."/>
            <person name="Borzym K."/>
            <person name="Langer I."/>
            <person name="Beck A."/>
            <person name="Lehrach H."/>
            <person name="Reinhardt R."/>
            <person name="Pohl T.M."/>
            <person name="Eger P."/>
            <person name="Zimmermann W."/>
            <person name="Wedler H."/>
            <person name="Wambutt R."/>
            <person name="Purnelle B."/>
            <person name="Goffeau A."/>
            <person name="Cadieu E."/>
            <person name="Dreano S."/>
            <person name="Gloux S."/>
            <person name="Lelaure V."/>
            <person name="Mottier S."/>
            <person name="Galibert F."/>
            <person name="Aves S.J."/>
            <person name="Xiang Z."/>
            <person name="Hunt C."/>
            <person name="Moore K."/>
            <person name="Hurst S.M."/>
            <person name="Lucas M."/>
            <person name="Rochet M."/>
            <person name="Gaillardin C."/>
            <person name="Tallada V.A."/>
            <person name="Garzon A."/>
            <person name="Thode G."/>
            <person name="Daga R.R."/>
            <person name="Cruzado L."/>
            <person name="Jimenez J."/>
            <person name="Sanchez M."/>
            <person name="del Rey F."/>
            <person name="Benito J."/>
            <person name="Dominguez A."/>
            <person name="Revuelta J.L."/>
            <person name="Moreno S."/>
            <person name="Armstrong J."/>
            <person name="Forsburg S.L."/>
            <person name="Cerutti L."/>
            <person name="Lowe T."/>
            <person name="McCombie W.R."/>
            <person name="Paulsen I."/>
            <person name="Potashkin J."/>
            <person name="Shpakovski G.V."/>
            <person name="Ussery D."/>
            <person name="Barrell B.G."/>
            <person name="Nurse P."/>
        </authorList>
    </citation>
    <scope>NUCLEOTIDE SEQUENCE [LARGE SCALE GENOMIC DNA]</scope>
    <source>
        <strain>972 / ATCC 24843</strain>
    </source>
</reference>
<gene>
    <name type="ORF">SPBC83.12</name>
</gene>
<dbReference type="EMBL" id="CU329671">
    <property type="protein sequence ID" value="CAB36874.1"/>
    <property type="molecule type" value="Genomic_DNA"/>
</dbReference>
<dbReference type="PIR" id="T40701">
    <property type="entry name" value="T40701"/>
</dbReference>
<dbReference type="RefSeq" id="NP_595644.1">
    <property type="nucleotide sequence ID" value="NM_001021538.2"/>
</dbReference>
<dbReference type="PaxDb" id="4896-SPBC83.12.1"/>
<dbReference type="EnsemblFungi" id="SPBC83.12.1">
    <property type="protein sequence ID" value="SPBC83.12.1:pep"/>
    <property type="gene ID" value="SPBC83.12"/>
</dbReference>
<dbReference type="KEGG" id="spo:2540549"/>
<dbReference type="PomBase" id="SPBC83.12"/>
<dbReference type="VEuPathDB" id="FungiDB:SPBC83.12"/>
<dbReference type="HOGENOM" id="CLU_1644701_0_0_1"/>
<dbReference type="InParanoid" id="O94696"/>
<dbReference type="PRO" id="PR:O94696"/>
<dbReference type="Proteomes" id="UP000002485">
    <property type="component" value="Chromosome II"/>
</dbReference>
<dbReference type="GO" id="GO:0005829">
    <property type="term" value="C:cytosol"/>
    <property type="evidence" value="ECO:0007005"/>
    <property type="project" value="PomBase"/>
</dbReference>
<dbReference type="GO" id="GO:0005634">
    <property type="term" value="C:nucleus"/>
    <property type="evidence" value="ECO:0007005"/>
    <property type="project" value="PomBase"/>
</dbReference>
<keyword id="KW-1185">Reference proteome</keyword>
<feature type="chain" id="PRO_0000116754" description="Uncharacterized protein C83.12">
    <location>
        <begin position="1"/>
        <end position="161"/>
    </location>
</feature>
<proteinExistence type="predicted"/>
<protein>
    <recommendedName>
        <fullName>Uncharacterized protein C83.12</fullName>
    </recommendedName>
</protein>
<organism>
    <name type="scientific">Schizosaccharomyces pombe (strain 972 / ATCC 24843)</name>
    <name type="common">Fission yeast</name>
    <dbReference type="NCBI Taxonomy" id="284812"/>
    <lineage>
        <taxon>Eukaryota</taxon>
        <taxon>Fungi</taxon>
        <taxon>Dikarya</taxon>
        <taxon>Ascomycota</taxon>
        <taxon>Taphrinomycotina</taxon>
        <taxon>Schizosaccharomycetes</taxon>
        <taxon>Schizosaccharomycetales</taxon>
        <taxon>Schizosaccharomycetaceae</taxon>
        <taxon>Schizosaccharomyces</taxon>
    </lineage>
</organism>